<protein>
    <recommendedName>
        <fullName>Protein Dr1</fullName>
    </recommendedName>
    <alternativeName>
        <fullName>Down-regulator of transcription 1</fullName>
    </alternativeName>
    <alternativeName>
        <fullName>Negative cofactor 2-beta</fullName>
        <shortName>NC2-beta</shortName>
    </alternativeName>
    <alternativeName>
        <fullName>TATA-binding protein-associated phosphoprotein</fullName>
    </alternativeName>
</protein>
<sequence>MASSSGNDDDLTIPRAAINKMIKETLPNVRVANDARELVVNCCTEFIHLISSEANEICNKSEKKTISPEHVIQALESLGFGSYISEVKEVLQECKTVALKRRKASSRLENLGIPEEELLRQQQELFAKARQQQAELAQQEWLQMQQAAQQAQLAAASASASNQAGSSQDEDDDDDI</sequence>
<organism>
    <name type="scientific">Rattus norvegicus</name>
    <name type="common">Rat</name>
    <dbReference type="NCBI Taxonomy" id="10116"/>
    <lineage>
        <taxon>Eukaryota</taxon>
        <taxon>Metazoa</taxon>
        <taxon>Chordata</taxon>
        <taxon>Craniata</taxon>
        <taxon>Vertebrata</taxon>
        <taxon>Euteleostomi</taxon>
        <taxon>Mammalia</taxon>
        <taxon>Eutheria</taxon>
        <taxon>Euarchontoglires</taxon>
        <taxon>Glires</taxon>
        <taxon>Rodentia</taxon>
        <taxon>Myomorpha</taxon>
        <taxon>Muroidea</taxon>
        <taxon>Muridae</taxon>
        <taxon>Murinae</taxon>
        <taxon>Rattus</taxon>
    </lineage>
</organism>
<proteinExistence type="evidence at transcript level"/>
<comment type="function">
    <text evidence="1">The association of the DR1/DRAP1 heterodimer with TBP results in a functional repression of both activated and basal transcription of class II genes. This interaction precludes the formation of a transcription-competent complex by inhibiting the association of TFIIA and/or TFIIB with TBP. Can bind to DNA on its own. Component of the ATAC complex, a complex with histone acetyltransferase activity on histones H3 and H4 (By similarity).</text>
</comment>
<comment type="subunit">
    <text evidence="1">Heterodimer with DRAP1. DR1 exists in solution as a homotetramer that dissociates during interaction with TBP and then, after complexing with TBP, reassociates at a slow rate, to reconstitute the tetramer. Component of the ADA2A-containing complex (ATAC), composed of KAT14, KAT2A, TADA2L, TADA3L, ZZ3, MBIP, WDR5, YEATS2, CCDC101 and DR1 (By similarity).</text>
</comment>
<comment type="subcellular location">
    <subcellularLocation>
        <location evidence="1">Nucleus</location>
    </subcellularLocation>
</comment>
<comment type="PTM">
    <text evidence="1">Phosphorylation regulates its interaction with TBP. Not phosphorylated when bound to DRAP1 (By similarity).</text>
</comment>
<comment type="similarity">
    <text evidence="5">Belongs to the NC2 beta/DR1 family.</text>
</comment>
<accession>Q5XI68</accession>
<gene>
    <name type="primary">Dr1</name>
</gene>
<evidence type="ECO:0000250" key="1"/>
<evidence type="ECO:0000250" key="2">
    <source>
        <dbReference type="UniProtKB" id="Q01658"/>
    </source>
</evidence>
<evidence type="ECO:0000255" key="3"/>
<evidence type="ECO:0000256" key="4">
    <source>
        <dbReference type="SAM" id="MobiDB-lite"/>
    </source>
</evidence>
<evidence type="ECO:0000305" key="5"/>
<feature type="initiator methionine" description="Removed" evidence="2">
    <location>
        <position position="1"/>
    </location>
</feature>
<feature type="chain" id="PRO_0000072442" description="Protein Dr1">
    <location>
        <begin position="2"/>
        <end position="176"/>
    </location>
</feature>
<feature type="domain" description="Histone-fold" evidence="3">
    <location>
        <begin position="12"/>
        <end position="75"/>
    </location>
</feature>
<feature type="region of interest" description="Disordered" evidence="4">
    <location>
        <begin position="152"/>
        <end position="176"/>
    </location>
</feature>
<feature type="short sequence motif" description="Nuclear localization signal" evidence="3">
    <location>
        <begin position="100"/>
        <end position="103"/>
    </location>
</feature>
<feature type="compositionally biased region" description="Low complexity" evidence="4">
    <location>
        <begin position="152"/>
        <end position="167"/>
    </location>
</feature>
<feature type="modified residue" description="N-acetylalanine" evidence="2">
    <location>
        <position position="2"/>
    </location>
</feature>
<feature type="modified residue" description="Phosphoserine" evidence="2">
    <location>
        <position position="105"/>
    </location>
</feature>
<feature type="modified residue" description="Phosphoserine" evidence="2">
    <location>
        <position position="106"/>
    </location>
</feature>
<feature type="modified residue" description="Phosphoserine" evidence="2">
    <location>
        <position position="166"/>
    </location>
</feature>
<feature type="modified residue" description="Phosphoserine" evidence="2">
    <location>
        <position position="167"/>
    </location>
</feature>
<reference key="1">
    <citation type="journal article" date="2004" name="Genome Res.">
        <title>The status, quality, and expansion of the NIH full-length cDNA project: the Mammalian Gene Collection (MGC).</title>
        <authorList>
            <consortium name="The MGC Project Team"/>
        </authorList>
    </citation>
    <scope>NUCLEOTIDE SEQUENCE [LARGE SCALE MRNA]</scope>
    <source>
        <tissue>Testis</tissue>
    </source>
</reference>
<dbReference type="EMBL" id="BC083822">
    <property type="protein sequence ID" value="AAH83822.1"/>
    <property type="molecule type" value="mRNA"/>
</dbReference>
<dbReference type="RefSeq" id="NP_001011914.1">
    <property type="nucleotide sequence ID" value="NM_001011914.1"/>
</dbReference>
<dbReference type="RefSeq" id="XP_003751365.1">
    <property type="nucleotide sequence ID" value="XM_003751317.4"/>
</dbReference>
<dbReference type="RefSeq" id="XP_017460226.1">
    <property type="nucleotide sequence ID" value="XM_017604737.1"/>
</dbReference>
<dbReference type="SMR" id="Q5XI68"/>
<dbReference type="FunCoup" id="Q5XI68">
    <property type="interactions" value="3202"/>
</dbReference>
<dbReference type="STRING" id="10116.ENSRNOP00000000080"/>
<dbReference type="iPTMnet" id="Q5XI68"/>
<dbReference type="PhosphoSitePlus" id="Q5XI68"/>
<dbReference type="jPOST" id="Q5XI68"/>
<dbReference type="PaxDb" id="10116-ENSRNOP00000000080"/>
<dbReference type="GeneID" id="289881"/>
<dbReference type="KEGG" id="rno:289881"/>
<dbReference type="UCSC" id="RGD:1305201">
    <property type="organism name" value="rat"/>
</dbReference>
<dbReference type="AGR" id="RGD:1305201"/>
<dbReference type="CTD" id="1810"/>
<dbReference type="RGD" id="1305201">
    <property type="gene designation" value="Dr1"/>
</dbReference>
<dbReference type="VEuPathDB" id="HostDB:ENSRNOG00000000070"/>
<dbReference type="eggNOG" id="KOG0871">
    <property type="taxonomic scope" value="Eukaryota"/>
</dbReference>
<dbReference type="HOGENOM" id="CLU_066247_11_1_1"/>
<dbReference type="InParanoid" id="Q5XI68"/>
<dbReference type="OrthoDB" id="601405at2759"/>
<dbReference type="PhylomeDB" id="Q5XI68"/>
<dbReference type="TreeFam" id="TF317588"/>
<dbReference type="Reactome" id="R-RNO-9772755">
    <property type="pathway name" value="Formation of WDR5-containing histone-modifying complexes"/>
</dbReference>
<dbReference type="PRO" id="PR:Q5XI68"/>
<dbReference type="Proteomes" id="UP000002494">
    <property type="component" value="Chromosome 14"/>
</dbReference>
<dbReference type="Bgee" id="ENSRNOG00000000070">
    <property type="expression patterns" value="Expressed in thymus and 18 other cell types or tissues"/>
</dbReference>
<dbReference type="GO" id="GO:0140672">
    <property type="term" value="C:ATAC complex"/>
    <property type="evidence" value="ECO:0000266"/>
    <property type="project" value="RGD"/>
</dbReference>
<dbReference type="GO" id="GO:0017054">
    <property type="term" value="C:negative cofactor 2 complex"/>
    <property type="evidence" value="ECO:0000318"/>
    <property type="project" value="GO_Central"/>
</dbReference>
<dbReference type="GO" id="GO:0005634">
    <property type="term" value="C:nucleus"/>
    <property type="evidence" value="ECO:0000266"/>
    <property type="project" value="RGD"/>
</dbReference>
<dbReference type="GO" id="GO:0090575">
    <property type="term" value="C:RNA polymerase II transcription regulator complex"/>
    <property type="evidence" value="ECO:0000266"/>
    <property type="project" value="RGD"/>
</dbReference>
<dbReference type="GO" id="GO:0003677">
    <property type="term" value="F:DNA binding"/>
    <property type="evidence" value="ECO:0007669"/>
    <property type="project" value="UniProtKB-KW"/>
</dbReference>
<dbReference type="GO" id="GO:0046982">
    <property type="term" value="F:protein heterodimerization activity"/>
    <property type="evidence" value="ECO:0007669"/>
    <property type="project" value="InterPro"/>
</dbReference>
<dbReference type="GO" id="GO:0016251">
    <property type="term" value="F:RNA polymerase II general transcription initiation factor activity"/>
    <property type="evidence" value="ECO:0000266"/>
    <property type="project" value="RGD"/>
</dbReference>
<dbReference type="GO" id="GO:0017025">
    <property type="term" value="F:TBP-class protein binding"/>
    <property type="evidence" value="ECO:0000266"/>
    <property type="project" value="RGD"/>
</dbReference>
<dbReference type="GO" id="GO:0000122">
    <property type="term" value="P:negative regulation of transcription by RNA polymerase II"/>
    <property type="evidence" value="ECO:0000266"/>
    <property type="project" value="RGD"/>
</dbReference>
<dbReference type="GO" id="GO:0051726">
    <property type="term" value="P:regulation of cell cycle"/>
    <property type="evidence" value="ECO:0000266"/>
    <property type="project" value="RGD"/>
</dbReference>
<dbReference type="GO" id="GO:0051302">
    <property type="term" value="P:regulation of cell division"/>
    <property type="evidence" value="ECO:0000266"/>
    <property type="project" value="RGD"/>
</dbReference>
<dbReference type="GO" id="GO:0006355">
    <property type="term" value="P:regulation of DNA-templated transcription"/>
    <property type="evidence" value="ECO:0000266"/>
    <property type="project" value="RGD"/>
</dbReference>
<dbReference type="GO" id="GO:0045995">
    <property type="term" value="P:regulation of embryonic development"/>
    <property type="evidence" value="ECO:0000266"/>
    <property type="project" value="RGD"/>
</dbReference>
<dbReference type="GO" id="GO:0006357">
    <property type="term" value="P:regulation of transcription by RNA polymerase II"/>
    <property type="evidence" value="ECO:0000266"/>
    <property type="project" value="RGD"/>
</dbReference>
<dbReference type="GO" id="GO:0051123">
    <property type="term" value="P:RNA polymerase II preinitiation complex assembly"/>
    <property type="evidence" value="ECO:0000318"/>
    <property type="project" value="GO_Central"/>
</dbReference>
<dbReference type="CDD" id="cd22905">
    <property type="entry name" value="HFD_Dr1"/>
    <property type="match status" value="1"/>
</dbReference>
<dbReference type="FunFam" id="1.10.20.10:FF:000019">
    <property type="entry name" value="Negative cofactor 2 beta"/>
    <property type="match status" value="1"/>
</dbReference>
<dbReference type="Gene3D" id="1.10.20.10">
    <property type="entry name" value="Histone, subunit A"/>
    <property type="match status" value="1"/>
</dbReference>
<dbReference type="InterPro" id="IPR003958">
    <property type="entry name" value="CBFA_NFYB_domain"/>
</dbReference>
<dbReference type="InterPro" id="IPR009072">
    <property type="entry name" value="Histone-fold"/>
</dbReference>
<dbReference type="InterPro" id="IPR042225">
    <property type="entry name" value="Ncb2"/>
</dbReference>
<dbReference type="PANTHER" id="PTHR46138">
    <property type="entry name" value="PROTEIN DR1"/>
    <property type="match status" value="1"/>
</dbReference>
<dbReference type="PANTHER" id="PTHR46138:SF1">
    <property type="entry name" value="PROTEIN DR1"/>
    <property type="match status" value="1"/>
</dbReference>
<dbReference type="Pfam" id="PF00808">
    <property type="entry name" value="CBFD_NFYB_HMF"/>
    <property type="match status" value="1"/>
</dbReference>
<dbReference type="PRINTS" id="PR00615">
    <property type="entry name" value="CCAATSUBUNTA"/>
</dbReference>
<dbReference type="SUPFAM" id="SSF47113">
    <property type="entry name" value="Histone-fold"/>
    <property type="match status" value="1"/>
</dbReference>
<name>NC2B_RAT</name>
<keyword id="KW-0007">Acetylation</keyword>
<keyword id="KW-0238">DNA-binding</keyword>
<keyword id="KW-0539">Nucleus</keyword>
<keyword id="KW-0597">Phosphoprotein</keyword>
<keyword id="KW-1185">Reference proteome</keyword>
<keyword id="KW-0678">Repressor</keyword>
<keyword id="KW-0804">Transcription</keyword>
<keyword id="KW-0805">Transcription regulation</keyword>